<accession>Q6GHU1</accession>
<name>MUTS2_STAAR</name>
<evidence type="ECO:0000255" key="1">
    <source>
        <dbReference type="HAMAP-Rule" id="MF_00092"/>
    </source>
</evidence>
<gene>
    <name evidence="1" type="primary">mutS2</name>
    <name evidence="1" type="synonym">rqcU</name>
    <name type="ordered locus">SAR1117</name>
</gene>
<comment type="function">
    <text evidence="1">Endonuclease that is involved in the suppression of homologous recombination and thus may have a key role in the control of bacterial genetic diversity.</text>
</comment>
<comment type="function">
    <text evidence="1">Acts as a ribosome collision sensor, splitting the ribosome into its 2 subunits. Detects stalled/collided 70S ribosomes which it binds and splits by an ATP-hydrolysis driven conformational change. Acts upstream of the ribosome quality control system (RQC), a ribosome-associated complex that mediates the extraction of incompletely synthesized nascent chains from stalled ribosomes and their subsequent degradation. Probably generates substrates for RQC.</text>
</comment>
<comment type="subunit">
    <text evidence="1">Homodimer. Binds to stalled ribosomes, contacting rRNA.</text>
</comment>
<comment type="similarity">
    <text evidence="1">Belongs to the DNA mismatch repair MutS family. MutS2 subfamily.</text>
</comment>
<feature type="chain" id="PRO_0000115230" description="Endonuclease MutS2">
    <location>
        <begin position="1"/>
        <end position="782"/>
    </location>
</feature>
<feature type="domain" description="Smr" evidence="1">
    <location>
        <begin position="707"/>
        <end position="782"/>
    </location>
</feature>
<feature type="binding site" evidence="1">
    <location>
        <begin position="336"/>
        <end position="343"/>
    </location>
    <ligand>
        <name>ATP</name>
        <dbReference type="ChEBI" id="CHEBI:30616"/>
    </ligand>
</feature>
<dbReference type="EC" id="3.1.-.-" evidence="1"/>
<dbReference type="EC" id="3.6.4.-" evidence="1"/>
<dbReference type="EMBL" id="BX571856">
    <property type="protein sequence ID" value="CAG40120.1"/>
    <property type="molecule type" value="Genomic_DNA"/>
</dbReference>
<dbReference type="RefSeq" id="WP_001249264.1">
    <property type="nucleotide sequence ID" value="NC_002952.2"/>
</dbReference>
<dbReference type="SMR" id="Q6GHU1"/>
<dbReference type="KEGG" id="sar:SAR1117"/>
<dbReference type="HOGENOM" id="CLU_011252_2_1_9"/>
<dbReference type="Proteomes" id="UP000000596">
    <property type="component" value="Chromosome"/>
</dbReference>
<dbReference type="GO" id="GO:0005524">
    <property type="term" value="F:ATP binding"/>
    <property type="evidence" value="ECO:0007669"/>
    <property type="project" value="UniProtKB-UniRule"/>
</dbReference>
<dbReference type="GO" id="GO:0016887">
    <property type="term" value="F:ATP hydrolysis activity"/>
    <property type="evidence" value="ECO:0007669"/>
    <property type="project" value="InterPro"/>
</dbReference>
<dbReference type="GO" id="GO:0140664">
    <property type="term" value="F:ATP-dependent DNA damage sensor activity"/>
    <property type="evidence" value="ECO:0007669"/>
    <property type="project" value="InterPro"/>
</dbReference>
<dbReference type="GO" id="GO:0004519">
    <property type="term" value="F:endonuclease activity"/>
    <property type="evidence" value="ECO:0007669"/>
    <property type="project" value="UniProtKB-UniRule"/>
</dbReference>
<dbReference type="GO" id="GO:0030983">
    <property type="term" value="F:mismatched DNA binding"/>
    <property type="evidence" value="ECO:0007669"/>
    <property type="project" value="InterPro"/>
</dbReference>
<dbReference type="GO" id="GO:0043023">
    <property type="term" value="F:ribosomal large subunit binding"/>
    <property type="evidence" value="ECO:0007669"/>
    <property type="project" value="UniProtKB-UniRule"/>
</dbReference>
<dbReference type="GO" id="GO:0019843">
    <property type="term" value="F:rRNA binding"/>
    <property type="evidence" value="ECO:0007669"/>
    <property type="project" value="UniProtKB-UniRule"/>
</dbReference>
<dbReference type="GO" id="GO:0006298">
    <property type="term" value="P:mismatch repair"/>
    <property type="evidence" value="ECO:0007669"/>
    <property type="project" value="InterPro"/>
</dbReference>
<dbReference type="GO" id="GO:0045910">
    <property type="term" value="P:negative regulation of DNA recombination"/>
    <property type="evidence" value="ECO:0007669"/>
    <property type="project" value="InterPro"/>
</dbReference>
<dbReference type="GO" id="GO:0072344">
    <property type="term" value="P:rescue of stalled ribosome"/>
    <property type="evidence" value="ECO:0007669"/>
    <property type="project" value="UniProtKB-UniRule"/>
</dbReference>
<dbReference type="CDD" id="cd03280">
    <property type="entry name" value="ABC_MutS2"/>
    <property type="match status" value="1"/>
</dbReference>
<dbReference type="FunFam" id="3.30.1370.110:FF:000006">
    <property type="entry name" value="Endonuclease MutS2"/>
    <property type="match status" value="1"/>
</dbReference>
<dbReference type="FunFam" id="3.40.50.300:FF:000830">
    <property type="entry name" value="Endonuclease MutS2"/>
    <property type="match status" value="1"/>
</dbReference>
<dbReference type="Gene3D" id="3.30.1370.110">
    <property type="match status" value="1"/>
</dbReference>
<dbReference type="Gene3D" id="3.40.50.300">
    <property type="entry name" value="P-loop containing nucleotide triphosphate hydrolases"/>
    <property type="match status" value="1"/>
</dbReference>
<dbReference type="HAMAP" id="MF_00092">
    <property type="entry name" value="MutS2"/>
    <property type="match status" value="1"/>
</dbReference>
<dbReference type="InterPro" id="IPR000432">
    <property type="entry name" value="DNA_mismatch_repair_MutS_C"/>
</dbReference>
<dbReference type="InterPro" id="IPR007696">
    <property type="entry name" value="DNA_mismatch_repair_MutS_core"/>
</dbReference>
<dbReference type="InterPro" id="IPR036187">
    <property type="entry name" value="DNA_mismatch_repair_MutS_sf"/>
</dbReference>
<dbReference type="InterPro" id="IPR046893">
    <property type="entry name" value="MSSS"/>
</dbReference>
<dbReference type="InterPro" id="IPR045076">
    <property type="entry name" value="MutS"/>
</dbReference>
<dbReference type="InterPro" id="IPR005747">
    <property type="entry name" value="MutS2"/>
</dbReference>
<dbReference type="InterPro" id="IPR027417">
    <property type="entry name" value="P-loop_NTPase"/>
</dbReference>
<dbReference type="InterPro" id="IPR002625">
    <property type="entry name" value="Smr_dom"/>
</dbReference>
<dbReference type="InterPro" id="IPR036063">
    <property type="entry name" value="Smr_dom_sf"/>
</dbReference>
<dbReference type="NCBIfam" id="TIGR01069">
    <property type="entry name" value="mutS2"/>
    <property type="match status" value="1"/>
</dbReference>
<dbReference type="PANTHER" id="PTHR48466:SF2">
    <property type="entry name" value="OS10G0509000 PROTEIN"/>
    <property type="match status" value="1"/>
</dbReference>
<dbReference type="PANTHER" id="PTHR48466">
    <property type="entry name" value="OS10G0509000 PROTEIN-RELATED"/>
    <property type="match status" value="1"/>
</dbReference>
<dbReference type="Pfam" id="PF20297">
    <property type="entry name" value="MSSS"/>
    <property type="match status" value="1"/>
</dbReference>
<dbReference type="Pfam" id="PF00488">
    <property type="entry name" value="MutS_V"/>
    <property type="match status" value="1"/>
</dbReference>
<dbReference type="Pfam" id="PF01713">
    <property type="entry name" value="Smr"/>
    <property type="match status" value="1"/>
</dbReference>
<dbReference type="PIRSF" id="PIRSF005814">
    <property type="entry name" value="MutS_YshD"/>
    <property type="match status" value="1"/>
</dbReference>
<dbReference type="SMART" id="SM00534">
    <property type="entry name" value="MUTSac"/>
    <property type="match status" value="1"/>
</dbReference>
<dbReference type="SMART" id="SM00533">
    <property type="entry name" value="MUTSd"/>
    <property type="match status" value="1"/>
</dbReference>
<dbReference type="SMART" id="SM00463">
    <property type="entry name" value="SMR"/>
    <property type="match status" value="1"/>
</dbReference>
<dbReference type="SUPFAM" id="SSF48334">
    <property type="entry name" value="DNA repair protein MutS, domain III"/>
    <property type="match status" value="1"/>
</dbReference>
<dbReference type="SUPFAM" id="SSF52540">
    <property type="entry name" value="P-loop containing nucleoside triphosphate hydrolases"/>
    <property type="match status" value="1"/>
</dbReference>
<dbReference type="SUPFAM" id="SSF160443">
    <property type="entry name" value="SMR domain-like"/>
    <property type="match status" value="1"/>
</dbReference>
<dbReference type="PROSITE" id="PS00486">
    <property type="entry name" value="DNA_MISMATCH_REPAIR_2"/>
    <property type="match status" value="1"/>
</dbReference>
<dbReference type="PROSITE" id="PS50828">
    <property type="entry name" value="SMR"/>
    <property type="match status" value="1"/>
</dbReference>
<proteinExistence type="inferred from homology"/>
<keyword id="KW-0067">ATP-binding</keyword>
<keyword id="KW-0238">DNA-binding</keyword>
<keyword id="KW-0255">Endonuclease</keyword>
<keyword id="KW-0378">Hydrolase</keyword>
<keyword id="KW-0540">Nuclease</keyword>
<keyword id="KW-0547">Nucleotide-binding</keyword>
<keyword id="KW-0694">RNA-binding</keyword>
<keyword id="KW-0699">rRNA-binding</keyword>
<reference key="1">
    <citation type="journal article" date="2004" name="Proc. Natl. Acad. Sci. U.S.A.">
        <title>Complete genomes of two clinical Staphylococcus aureus strains: evidence for the rapid evolution of virulence and drug resistance.</title>
        <authorList>
            <person name="Holden M.T.G."/>
            <person name="Feil E.J."/>
            <person name="Lindsay J.A."/>
            <person name="Peacock S.J."/>
            <person name="Day N.P.J."/>
            <person name="Enright M.C."/>
            <person name="Foster T.J."/>
            <person name="Moore C.E."/>
            <person name="Hurst L."/>
            <person name="Atkin R."/>
            <person name="Barron A."/>
            <person name="Bason N."/>
            <person name="Bentley S.D."/>
            <person name="Chillingworth C."/>
            <person name="Chillingworth T."/>
            <person name="Churcher C."/>
            <person name="Clark L."/>
            <person name="Corton C."/>
            <person name="Cronin A."/>
            <person name="Doggett J."/>
            <person name="Dowd L."/>
            <person name="Feltwell T."/>
            <person name="Hance Z."/>
            <person name="Harris B."/>
            <person name="Hauser H."/>
            <person name="Holroyd S."/>
            <person name="Jagels K."/>
            <person name="James K.D."/>
            <person name="Lennard N."/>
            <person name="Line A."/>
            <person name="Mayes R."/>
            <person name="Moule S."/>
            <person name="Mungall K."/>
            <person name="Ormond D."/>
            <person name="Quail M.A."/>
            <person name="Rabbinowitsch E."/>
            <person name="Rutherford K.M."/>
            <person name="Sanders M."/>
            <person name="Sharp S."/>
            <person name="Simmonds M."/>
            <person name="Stevens K."/>
            <person name="Whitehead S."/>
            <person name="Barrell B.G."/>
            <person name="Spratt B.G."/>
            <person name="Parkhill J."/>
        </authorList>
    </citation>
    <scope>NUCLEOTIDE SEQUENCE [LARGE SCALE GENOMIC DNA]</scope>
    <source>
        <strain>MRSA252</strain>
    </source>
</reference>
<protein>
    <recommendedName>
        <fullName evidence="1">Endonuclease MutS2</fullName>
        <ecNumber evidence="1">3.1.-.-</ecNumber>
    </recommendedName>
    <alternativeName>
        <fullName evidence="1">Ribosome-associated protein quality control-upstream factor</fullName>
        <shortName evidence="1">RQC-upstream factor</shortName>
        <shortName evidence="1">RqcU</shortName>
        <ecNumber evidence="1">3.6.4.-</ecNumber>
    </alternativeName>
</protein>
<sequence length="782" mass="88564">MRQKTLDVLEFDKIKSLVANETISDLGLEKVNQMMPATNFETVVFQMEETDEIAQIYNKHRLPSLSGLSKVSAFIHRADIGGVLNVSELNLIKRLIQVQNQFKTFYNQLVEEDEGVKYPILDDKMNQLPVLTDLFQQINETCDTYDLYDNASYELQGIRSKISSTNQRIRQNLDRIVKSQANQKKLSDAIVTVRNERNVIPVKAEYRQDFNGIVHDQSASGQTLYIEPSSVVEMNNQISRLRHDEAIEKERILTQLTGYVAADKDALLVAEQVMGQLDFLIAKARCSRSIKGTKPIFKEERTVYLPKAYHPLLNRETVVANTIEFMEDIETVIITGPNTGGKTVTLKTLGLIIVMAQSGLLIPTLDGSQLSVFKNVYCDIGDEQSIEQSLSTFSSHMTNIVEILKNADKHSLVLFDELGAGTDPSEGAALAMSILDHVRKIGSLVMATTHYPELKAYSYNREGVMNASVEFDVDTLSPTYKLLMGVPGRSNAFDISKKLGLSLNIINKAKTMIGTDEKEINEMIESLERNYKRVETQRLELDRLVKEAEQVHDDLSKQYQQFQNYEKSLIEDAKEKANQKIKAATKEADDIIKDLRQLREQKGADVKEHELIDKKKRLDDHYEAKSIKQNVQKQKYDKIVAGDEVKVLSYGQKGEVLEIVNDEEAIVQMGIIKMKLPIEDLEKKQKEKVKPTKMVTRQNRQTIKTELDLRGYRYEDALIELDQYLDQAVLSNYEQVYIIHGKGTGALQKGVQQHLKKHKSVSDFRGGMPSEGGFGVTVATLK</sequence>
<organism>
    <name type="scientific">Staphylococcus aureus (strain MRSA252)</name>
    <dbReference type="NCBI Taxonomy" id="282458"/>
    <lineage>
        <taxon>Bacteria</taxon>
        <taxon>Bacillati</taxon>
        <taxon>Bacillota</taxon>
        <taxon>Bacilli</taxon>
        <taxon>Bacillales</taxon>
        <taxon>Staphylococcaceae</taxon>
        <taxon>Staphylococcus</taxon>
    </lineage>
</organism>